<organism>
    <name type="scientific">Staphylococcus aureus (strain Mu3 / ATCC 700698)</name>
    <dbReference type="NCBI Taxonomy" id="418127"/>
    <lineage>
        <taxon>Bacteria</taxon>
        <taxon>Bacillati</taxon>
        <taxon>Bacillota</taxon>
        <taxon>Bacilli</taxon>
        <taxon>Bacillales</taxon>
        <taxon>Staphylococcaceae</taxon>
        <taxon>Staphylococcus</taxon>
    </lineage>
</organism>
<accession>A7WZ83</accession>
<protein>
    <recommendedName>
        <fullName>Putative antiporter subunit mnhG2</fullName>
    </recommendedName>
    <alternativeName>
        <fullName>Mrp complex subunit G2</fullName>
    </alternativeName>
    <alternativeName>
        <fullName>Putative NADH-ubiquinone oxidoreductase subunit mnhF2</fullName>
    </alternativeName>
</protein>
<comment type="subunit">
    <text evidence="1">May form a heterooligomeric complex that consists of seven subunits: mnhA2, mnhB2, mnhC2, mnhD2, mnhE2, mnhF2 and mnhG2.</text>
</comment>
<comment type="subcellular location">
    <subcellularLocation>
        <location evidence="3">Cell membrane</location>
        <topology evidence="3">Multi-pass membrane protein</topology>
    </subcellularLocation>
</comment>
<comment type="similarity">
    <text evidence="3">Belongs to the CPA3 antiporters (TC 2.A.63) subunit G family.</text>
</comment>
<evidence type="ECO:0000250" key="1"/>
<evidence type="ECO:0000255" key="2"/>
<evidence type="ECO:0000305" key="3"/>
<reference key="1">
    <citation type="journal article" date="2008" name="Antimicrob. Agents Chemother.">
        <title>Mutated response regulator graR is responsible for phenotypic conversion of Staphylococcus aureus from heterogeneous vancomycin-intermediate resistance to vancomycin-intermediate resistance.</title>
        <authorList>
            <person name="Neoh H.-M."/>
            <person name="Cui L."/>
            <person name="Yuzawa H."/>
            <person name="Takeuchi F."/>
            <person name="Matsuo M."/>
            <person name="Hiramatsu K."/>
        </authorList>
    </citation>
    <scope>NUCLEOTIDE SEQUENCE [LARGE SCALE GENOMIC DNA]</scope>
    <source>
        <strain>Mu3 / ATCC 700698</strain>
    </source>
</reference>
<name>MNHG2_STAA1</name>
<gene>
    <name type="primary">mnhG2</name>
    <name type="synonym">mrpG2</name>
    <name type="ordered locus">SAHV_0625</name>
</gene>
<proteinExistence type="inferred from homology"/>
<sequence>MEITKEIFSLIAAVMLLLGSFIALISAIGIVKFQDVFLRSHAATKSSTLSVLLTLIGVLIYFIVNTGFFSVRLLLSLVFINLTSPVGMHLVARAAYRNGAYMYRKNDAHTHASILLSSNEQNSTEALQLRAKKREEHRKKWYQND</sequence>
<keyword id="KW-0050">Antiport</keyword>
<keyword id="KW-1003">Cell membrane</keyword>
<keyword id="KW-0406">Ion transport</keyword>
<keyword id="KW-0472">Membrane</keyword>
<keyword id="KW-0812">Transmembrane</keyword>
<keyword id="KW-1133">Transmembrane helix</keyword>
<keyword id="KW-0813">Transport</keyword>
<dbReference type="EMBL" id="AP009324">
    <property type="protein sequence ID" value="BAF77508.1"/>
    <property type="molecule type" value="Genomic_DNA"/>
</dbReference>
<dbReference type="RefSeq" id="WP_000406612.1">
    <property type="nucleotide sequence ID" value="NC_009782.1"/>
</dbReference>
<dbReference type="SMR" id="A7WZ83"/>
<dbReference type="KEGG" id="saw:SAHV_0625"/>
<dbReference type="HOGENOM" id="CLU_121334_0_3_9"/>
<dbReference type="GO" id="GO:0005886">
    <property type="term" value="C:plasma membrane"/>
    <property type="evidence" value="ECO:0007669"/>
    <property type="project" value="UniProtKB-SubCell"/>
</dbReference>
<dbReference type="GO" id="GO:0015385">
    <property type="term" value="F:sodium:proton antiporter activity"/>
    <property type="evidence" value="ECO:0007669"/>
    <property type="project" value="TreeGrafter"/>
</dbReference>
<dbReference type="InterPro" id="IPR005133">
    <property type="entry name" value="PhaG_MnhG_YufB"/>
</dbReference>
<dbReference type="NCBIfam" id="TIGR01300">
    <property type="entry name" value="CPA3_mnhG_phaG"/>
    <property type="match status" value="1"/>
</dbReference>
<dbReference type="NCBIfam" id="NF009236">
    <property type="entry name" value="PRK12586.1"/>
    <property type="match status" value="1"/>
</dbReference>
<dbReference type="NCBIfam" id="NF009314">
    <property type="entry name" value="PRK12674.1-2"/>
    <property type="match status" value="1"/>
</dbReference>
<dbReference type="PANTHER" id="PTHR34703">
    <property type="entry name" value="ANTIPORTER SUBUNIT MNHG2-RELATED"/>
    <property type="match status" value="1"/>
</dbReference>
<dbReference type="PANTHER" id="PTHR34703:SF1">
    <property type="entry name" value="ANTIPORTER SUBUNIT MNHG2-RELATED"/>
    <property type="match status" value="1"/>
</dbReference>
<dbReference type="Pfam" id="PF03334">
    <property type="entry name" value="PhaG_MnhG_YufB"/>
    <property type="match status" value="1"/>
</dbReference>
<feature type="chain" id="PRO_0000372178" description="Putative antiporter subunit mnhG2">
    <location>
        <begin position="1"/>
        <end position="145"/>
    </location>
</feature>
<feature type="transmembrane region" description="Helical" evidence="2">
    <location>
        <begin position="11"/>
        <end position="31"/>
    </location>
</feature>
<feature type="transmembrane region" description="Helical" evidence="2">
    <location>
        <begin position="51"/>
        <end position="71"/>
    </location>
</feature>
<feature type="transmembrane region" description="Helical" evidence="2">
    <location>
        <begin position="72"/>
        <end position="92"/>
    </location>
</feature>